<dbReference type="EC" id="7.3.2.1" evidence="1"/>
<dbReference type="EMBL" id="AE008692">
    <property type="protein sequence ID" value="AAV89674.2"/>
    <property type="molecule type" value="Genomic_DNA"/>
</dbReference>
<dbReference type="RefSeq" id="WP_011240891.1">
    <property type="nucleotide sequence ID" value="NZ_CP035711.1"/>
</dbReference>
<dbReference type="SMR" id="Q5NNN6"/>
<dbReference type="STRING" id="264203.ZMO1050"/>
<dbReference type="GeneID" id="79903814"/>
<dbReference type="KEGG" id="zmo:ZMO1050"/>
<dbReference type="eggNOG" id="COG1117">
    <property type="taxonomic scope" value="Bacteria"/>
</dbReference>
<dbReference type="HOGENOM" id="CLU_000604_1_22_5"/>
<dbReference type="Proteomes" id="UP000001173">
    <property type="component" value="Chromosome"/>
</dbReference>
<dbReference type="GO" id="GO:0005886">
    <property type="term" value="C:plasma membrane"/>
    <property type="evidence" value="ECO:0007669"/>
    <property type="project" value="UniProtKB-SubCell"/>
</dbReference>
<dbReference type="GO" id="GO:0005524">
    <property type="term" value="F:ATP binding"/>
    <property type="evidence" value="ECO:0007669"/>
    <property type="project" value="UniProtKB-KW"/>
</dbReference>
<dbReference type="GO" id="GO:0016887">
    <property type="term" value="F:ATP hydrolysis activity"/>
    <property type="evidence" value="ECO:0007669"/>
    <property type="project" value="InterPro"/>
</dbReference>
<dbReference type="GO" id="GO:0015415">
    <property type="term" value="F:ATPase-coupled phosphate ion transmembrane transporter activity"/>
    <property type="evidence" value="ECO:0007669"/>
    <property type="project" value="UniProtKB-EC"/>
</dbReference>
<dbReference type="GO" id="GO:0035435">
    <property type="term" value="P:phosphate ion transmembrane transport"/>
    <property type="evidence" value="ECO:0007669"/>
    <property type="project" value="InterPro"/>
</dbReference>
<dbReference type="CDD" id="cd03260">
    <property type="entry name" value="ABC_PstB_phosphate_transporter"/>
    <property type="match status" value="1"/>
</dbReference>
<dbReference type="Gene3D" id="3.40.50.300">
    <property type="entry name" value="P-loop containing nucleotide triphosphate hydrolases"/>
    <property type="match status" value="1"/>
</dbReference>
<dbReference type="InterPro" id="IPR003593">
    <property type="entry name" value="AAA+_ATPase"/>
</dbReference>
<dbReference type="InterPro" id="IPR003439">
    <property type="entry name" value="ABC_transporter-like_ATP-bd"/>
</dbReference>
<dbReference type="InterPro" id="IPR017871">
    <property type="entry name" value="ABC_transporter-like_CS"/>
</dbReference>
<dbReference type="InterPro" id="IPR027417">
    <property type="entry name" value="P-loop_NTPase"/>
</dbReference>
<dbReference type="InterPro" id="IPR005670">
    <property type="entry name" value="PstB-like"/>
</dbReference>
<dbReference type="NCBIfam" id="TIGR00972">
    <property type="entry name" value="3a0107s01c2"/>
    <property type="match status" value="1"/>
</dbReference>
<dbReference type="PANTHER" id="PTHR43423">
    <property type="entry name" value="ABC TRANSPORTER I FAMILY MEMBER 17"/>
    <property type="match status" value="1"/>
</dbReference>
<dbReference type="PANTHER" id="PTHR43423:SF3">
    <property type="entry name" value="PHOSPHATE IMPORT ATP-BINDING PROTEIN PSTB"/>
    <property type="match status" value="1"/>
</dbReference>
<dbReference type="Pfam" id="PF00005">
    <property type="entry name" value="ABC_tran"/>
    <property type="match status" value="1"/>
</dbReference>
<dbReference type="SMART" id="SM00382">
    <property type="entry name" value="AAA"/>
    <property type="match status" value="1"/>
</dbReference>
<dbReference type="SUPFAM" id="SSF52540">
    <property type="entry name" value="P-loop containing nucleoside triphosphate hydrolases"/>
    <property type="match status" value="1"/>
</dbReference>
<dbReference type="PROSITE" id="PS00211">
    <property type="entry name" value="ABC_TRANSPORTER_1"/>
    <property type="match status" value="1"/>
</dbReference>
<dbReference type="PROSITE" id="PS50893">
    <property type="entry name" value="ABC_TRANSPORTER_2"/>
    <property type="match status" value="1"/>
</dbReference>
<dbReference type="PROSITE" id="PS51238">
    <property type="entry name" value="PSTB"/>
    <property type="match status" value="1"/>
</dbReference>
<gene>
    <name evidence="1" type="primary">pstB</name>
    <name type="ordered locus">ZMO1050</name>
</gene>
<evidence type="ECO:0000255" key="1">
    <source>
        <dbReference type="HAMAP-Rule" id="MF_01702"/>
    </source>
</evidence>
<protein>
    <recommendedName>
        <fullName evidence="1">Phosphate import ATP-binding protein PstB</fullName>
        <ecNumber evidence="1">7.3.2.1</ecNumber>
    </recommendedName>
    <alternativeName>
        <fullName evidence="1">ABC phosphate transporter</fullName>
    </alternativeName>
    <alternativeName>
        <fullName evidence="1">Phosphate-transporting ATPase</fullName>
    </alternativeName>
</protein>
<comment type="function">
    <text evidence="1">Part of the ABC transporter complex PstSACB involved in phosphate import. Responsible for energy coupling to the transport system.</text>
</comment>
<comment type="catalytic activity">
    <reaction evidence="1">
        <text>phosphate(out) + ATP + H2O = ADP + 2 phosphate(in) + H(+)</text>
        <dbReference type="Rhea" id="RHEA:24440"/>
        <dbReference type="ChEBI" id="CHEBI:15377"/>
        <dbReference type="ChEBI" id="CHEBI:15378"/>
        <dbReference type="ChEBI" id="CHEBI:30616"/>
        <dbReference type="ChEBI" id="CHEBI:43474"/>
        <dbReference type="ChEBI" id="CHEBI:456216"/>
        <dbReference type="EC" id="7.3.2.1"/>
    </reaction>
</comment>
<comment type="subunit">
    <text evidence="1">The complex is composed of two ATP-binding proteins (PstB), two transmembrane proteins (PstC and PstA) and a solute-binding protein (PstS).</text>
</comment>
<comment type="subcellular location">
    <subcellularLocation>
        <location evidence="1">Cell inner membrane</location>
        <topology evidence="1">Peripheral membrane protein</topology>
    </subcellularLocation>
</comment>
<comment type="similarity">
    <text evidence="1">Belongs to the ABC transporter superfamily. Phosphate importer (TC 3.A.1.7) family.</text>
</comment>
<accession>Q5NNN6</accession>
<proteinExistence type="inferred from homology"/>
<organism>
    <name type="scientific">Zymomonas mobilis subsp. mobilis (strain ATCC 31821 / ZM4 / CP4)</name>
    <dbReference type="NCBI Taxonomy" id="264203"/>
    <lineage>
        <taxon>Bacteria</taxon>
        <taxon>Pseudomonadati</taxon>
        <taxon>Pseudomonadota</taxon>
        <taxon>Alphaproteobacteria</taxon>
        <taxon>Sphingomonadales</taxon>
        <taxon>Zymomonadaceae</taxon>
        <taxon>Zymomonas</taxon>
    </lineage>
</organism>
<sequence length="290" mass="32751">MTNKDNTVEDLEQFIAPPAAENLNLEARNLDFYYGTHQTLFNVSLPVERNKITALIGPSGCGKSTLLRILNRIYALYPQQYAVGRVLLDGKDILTDHDTLTRLKERGDNVTLDPLGDDISQIRARIGMVFQKPTPFPMSIYDNVAYGVRLHFNKSRQELDHIVERSLHRAALWDEVKDKLKESGLSLSGGQQQRLCVARGLAVEPEVLLLDEPASALDPVSTARLEETLMELKKDLSIVIVTHNLQQAARISDYTGFMYLGNMIEFCSTDRLFARPKTRRARDYLTGRFG</sequence>
<feature type="chain" id="PRO_0000272582" description="Phosphate import ATP-binding protein PstB">
    <location>
        <begin position="1"/>
        <end position="290"/>
    </location>
</feature>
<feature type="domain" description="ABC transporter" evidence="1">
    <location>
        <begin position="25"/>
        <end position="285"/>
    </location>
</feature>
<feature type="binding site" evidence="1">
    <location>
        <begin position="57"/>
        <end position="64"/>
    </location>
    <ligand>
        <name>ATP</name>
        <dbReference type="ChEBI" id="CHEBI:30616"/>
    </ligand>
</feature>
<keyword id="KW-0067">ATP-binding</keyword>
<keyword id="KW-0997">Cell inner membrane</keyword>
<keyword id="KW-1003">Cell membrane</keyword>
<keyword id="KW-0472">Membrane</keyword>
<keyword id="KW-0547">Nucleotide-binding</keyword>
<keyword id="KW-0592">Phosphate transport</keyword>
<keyword id="KW-1185">Reference proteome</keyword>
<keyword id="KW-1278">Translocase</keyword>
<keyword id="KW-0813">Transport</keyword>
<name>PSTB_ZYMMO</name>
<reference key="1">
    <citation type="journal article" date="2005" name="Nat. Biotechnol.">
        <title>The genome sequence of the ethanologenic bacterium Zymomonas mobilis ZM4.</title>
        <authorList>
            <person name="Seo J.-S."/>
            <person name="Chong H."/>
            <person name="Park H.S."/>
            <person name="Yoon K.-O."/>
            <person name="Jung C."/>
            <person name="Kim J.J."/>
            <person name="Hong J.H."/>
            <person name="Kim H."/>
            <person name="Kim J.-H."/>
            <person name="Kil J.-I."/>
            <person name="Park C.J."/>
            <person name="Oh H.-M."/>
            <person name="Lee J.-S."/>
            <person name="Jin S.-J."/>
            <person name="Um H.-W."/>
            <person name="Lee H.-J."/>
            <person name="Oh S.-J."/>
            <person name="Kim J.Y."/>
            <person name="Kang H.L."/>
            <person name="Lee S.Y."/>
            <person name="Lee K.J."/>
            <person name="Kang H.S."/>
        </authorList>
    </citation>
    <scope>NUCLEOTIDE SEQUENCE [LARGE SCALE GENOMIC DNA]</scope>
    <source>
        <strain>ATCC 31821 / ZM4 / CP4</strain>
    </source>
</reference>